<protein>
    <recommendedName>
        <fullName evidence="1">Small ribosomal subunit protein bS18</fullName>
    </recommendedName>
    <alternativeName>
        <fullName evidence="2">30S ribosomal protein S18</fullName>
    </alternativeName>
</protein>
<accession>P66460</accession>
<accession>P56025</accession>
<name>RS18_HELPJ</name>
<sequence length="85" mass="10448">MERKRYSKRYCKYTEAKISFIDYKDLDMLKHTLSERYKIMPRRLTGNSKKWQERVEVAIKRARHMALIPYIVDRKKVVDSPFKQH</sequence>
<proteinExistence type="inferred from homology"/>
<dbReference type="EMBL" id="AE001439">
    <property type="protein sequence ID" value="AAD06750.1"/>
    <property type="molecule type" value="Genomic_DNA"/>
</dbReference>
<dbReference type="RefSeq" id="WP_000440196.1">
    <property type="nucleotide sequence ID" value="NZ_CP011330.1"/>
</dbReference>
<dbReference type="SMR" id="P66460"/>
<dbReference type="KEGG" id="hpj:jhp_1165"/>
<dbReference type="PATRIC" id="fig|85963.30.peg.1407"/>
<dbReference type="eggNOG" id="COG0238">
    <property type="taxonomic scope" value="Bacteria"/>
</dbReference>
<dbReference type="Proteomes" id="UP000000804">
    <property type="component" value="Chromosome"/>
</dbReference>
<dbReference type="GO" id="GO:0022627">
    <property type="term" value="C:cytosolic small ribosomal subunit"/>
    <property type="evidence" value="ECO:0007669"/>
    <property type="project" value="TreeGrafter"/>
</dbReference>
<dbReference type="GO" id="GO:0070181">
    <property type="term" value="F:small ribosomal subunit rRNA binding"/>
    <property type="evidence" value="ECO:0007669"/>
    <property type="project" value="TreeGrafter"/>
</dbReference>
<dbReference type="GO" id="GO:0003735">
    <property type="term" value="F:structural constituent of ribosome"/>
    <property type="evidence" value="ECO:0007669"/>
    <property type="project" value="InterPro"/>
</dbReference>
<dbReference type="GO" id="GO:0006412">
    <property type="term" value="P:translation"/>
    <property type="evidence" value="ECO:0007669"/>
    <property type="project" value="UniProtKB-UniRule"/>
</dbReference>
<dbReference type="FunFam" id="4.10.640.10:FF:000005">
    <property type="entry name" value="30S ribosomal protein S18"/>
    <property type="match status" value="1"/>
</dbReference>
<dbReference type="Gene3D" id="4.10.640.10">
    <property type="entry name" value="Ribosomal protein S18"/>
    <property type="match status" value="1"/>
</dbReference>
<dbReference type="HAMAP" id="MF_00270">
    <property type="entry name" value="Ribosomal_bS18"/>
    <property type="match status" value="1"/>
</dbReference>
<dbReference type="InterPro" id="IPR001648">
    <property type="entry name" value="Ribosomal_bS18"/>
</dbReference>
<dbReference type="InterPro" id="IPR018275">
    <property type="entry name" value="Ribosomal_bS18_CS"/>
</dbReference>
<dbReference type="InterPro" id="IPR036870">
    <property type="entry name" value="Ribosomal_bS18_sf"/>
</dbReference>
<dbReference type="NCBIfam" id="TIGR00165">
    <property type="entry name" value="S18"/>
    <property type="match status" value="1"/>
</dbReference>
<dbReference type="PANTHER" id="PTHR13479">
    <property type="entry name" value="30S RIBOSOMAL PROTEIN S18"/>
    <property type="match status" value="1"/>
</dbReference>
<dbReference type="PANTHER" id="PTHR13479:SF40">
    <property type="entry name" value="SMALL RIBOSOMAL SUBUNIT PROTEIN BS18M"/>
    <property type="match status" value="1"/>
</dbReference>
<dbReference type="Pfam" id="PF01084">
    <property type="entry name" value="Ribosomal_S18"/>
    <property type="match status" value="1"/>
</dbReference>
<dbReference type="PRINTS" id="PR00974">
    <property type="entry name" value="RIBOSOMALS18"/>
</dbReference>
<dbReference type="SUPFAM" id="SSF46911">
    <property type="entry name" value="Ribosomal protein S18"/>
    <property type="match status" value="1"/>
</dbReference>
<dbReference type="PROSITE" id="PS00057">
    <property type="entry name" value="RIBOSOMAL_S18"/>
    <property type="match status" value="1"/>
</dbReference>
<organism>
    <name type="scientific">Helicobacter pylori (strain J99 / ATCC 700824)</name>
    <name type="common">Campylobacter pylori J99</name>
    <dbReference type="NCBI Taxonomy" id="85963"/>
    <lineage>
        <taxon>Bacteria</taxon>
        <taxon>Pseudomonadati</taxon>
        <taxon>Campylobacterota</taxon>
        <taxon>Epsilonproteobacteria</taxon>
        <taxon>Campylobacterales</taxon>
        <taxon>Helicobacteraceae</taxon>
        <taxon>Helicobacter</taxon>
    </lineage>
</organism>
<keyword id="KW-0687">Ribonucleoprotein</keyword>
<keyword id="KW-0689">Ribosomal protein</keyword>
<keyword id="KW-0694">RNA-binding</keyword>
<keyword id="KW-0699">rRNA-binding</keyword>
<comment type="function">
    <text evidence="1">Binds as a heterodimer with protein bS6 to the central domain of the 16S rRNA, where it helps stabilize the platform of the 30S subunit.</text>
</comment>
<comment type="subunit">
    <text evidence="1">Part of the 30S ribosomal subunit. Forms a tight heterodimer with protein bS6.</text>
</comment>
<comment type="similarity">
    <text evidence="1">Belongs to the bacterial ribosomal protein bS18 family.</text>
</comment>
<gene>
    <name evidence="1" type="primary">rpsR</name>
    <name type="ordered locus">jhp_1165</name>
</gene>
<evidence type="ECO:0000255" key="1">
    <source>
        <dbReference type="HAMAP-Rule" id="MF_00270"/>
    </source>
</evidence>
<evidence type="ECO:0000305" key="2"/>
<feature type="chain" id="PRO_0000111164" description="Small ribosomal subunit protein bS18">
    <location>
        <begin position="1"/>
        <end position="85"/>
    </location>
</feature>
<reference key="1">
    <citation type="journal article" date="1999" name="Nature">
        <title>Genomic sequence comparison of two unrelated isolates of the human gastric pathogen Helicobacter pylori.</title>
        <authorList>
            <person name="Alm R.A."/>
            <person name="Ling L.-S.L."/>
            <person name="Moir D.T."/>
            <person name="King B.L."/>
            <person name="Brown E.D."/>
            <person name="Doig P.C."/>
            <person name="Smith D.R."/>
            <person name="Noonan B."/>
            <person name="Guild B.C."/>
            <person name="deJonge B.L."/>
            <person name="Carmel G."/>
            <person name="Tummino P.J."/>
            <person name="Caruso A."/>
            <person name="Uria-Nickelsen M."/>
            <person name="Mills D.M."/>
            <person name="Ives C."/>
            <person name="Gibson R."/>
            <person name="Merberg D."/>
            <person name="Mills S.D."/>
            <person name="Jiang Q."/>
            <person name="Taylor D.E."/>
            <person name="Vovis G.F."/>
            <person name="Trust T.J."/>
        </authorList>
    </citation>
    <scope>NUCLEOTIDE SEQUENCE [LARGE SCALE GENOMIC DNA]</scope>
    <source>
        <strain>J99 / ATCC 700824</strain>
    </source>
</reference>